<comment type="function">
    <text evidence="1">Catalyzes the conversion of dihydroorotate to orotate with NAD(+) as electron acceptor.</text>
</comment>
<comment type="catalytic activity">
    <reaction>
        <text>(S)-dihydroorotate + NAD(+) = orotate + NADH + H(+)</text>
        <dbReference type="Rhea" id="RHEA:13513"/>
        <dbReference type="ChEBI" id="CHEBI:15378"/>
        <dbReference type="ChEBI" id="CHEBI:30839"/>
        <dbReference type="ChEBI" id="CHEBI:30864"/>
        <dbReference type="ChEBI" id="CHEBI:57540"/>
        <dbReference type="ChEBI" id="CHEBI:57945"/>
        <dbReference type="EC" id="1.3.1.14"/>
    </reaction>
</comment>
<comment type="cofactor">
    <cofactor evidence="1">
        <name>FMN</name>
        <dbReference type="ChEBI" id="CHEBI:58210"/>
    </cofactor>
    <text evidence="1">Binds 1 FMN per subunit.</text>
</comment>
<comment type="pathway">
    <text>Pyrimidine metabolism; UMP biosynthesis via de novo pathway; orotate from (S)-dihydroorotate (NAD(+) route): step 1/1.</text>
</comment>
<comment type="subunit">
    <text evidence="1">Heterotetramer of 2 PyrK and 2 PyrD type B subunits.</text>
</comment>
<comment type="subcellular location">
    <subcellularLocation>
        <location evidence="1">Cytoplasm</location>
    </subcellularLocation>
</comment>
<comment type="similarity">
    <text evidence="2">Belongs to the dihydroorotate dehydrogenase family. Type 1 subfamily.</text>
</comment>
<name>PYRDB_BACHK</name>
<accession>Q6HET0</accession>
<reference key="1">
    <citation type="journal article" date="2006" name="J. Bacteriol.">
        <title>Pathogenomic sequence analysis of Bacillus cereus and Bacillus thuringiensis isolates closely related to Bacillus anthracis.</title>
        <authorList>
            <person name="Han C.S."/>
            <person name="Xie G."/>
            <person name="Challacombe J.F."/>
            <person name="Altherr M.R."/>
            <person name="Bhotika S.S."/>
            <person name="Bruce D."/>
            <person name="Campbell C.S."/>
            <person name="Campbell M.L."/>
            <person name="Chen J."/>
            <person name="Chertkov O."/>
            <person name="Cleland C."/>
            <person name="Dimitrijevic M."/>
            <person name="Doggett N.A."/>
            <person name="Fawcett J.J."/>
            <person name="Glavina T."/>
            <person name="Goodwin L.A."/>
            <person name="Hill K.K."/>
            <person name="Hitchcock P."/>
            <person name="Jackson P.J."/>
            <person name="Keim P."/>
            <person name="Kewalramani A.R."/>
            <person name="Longmire J."/>
            <person name="Lucas S."/>
            <person name="Malfatti S."/>
            <person name="McMurry K."/>
            <person name="Meincke L.J."/>
            <person name="Misra M."/>
            <person name="Moseman B.L."/>
            <person name="Mundt M."/>
            <person name="Munk A.C."/>
            <person name="Okinaka R.T."/>
            <person name="Parson-Quintana B."/>
            <person name="Reilly L.P."/>
            <person name="Richardson P."/>
            <person name="Robinson D.L."/>
            <person name="Rubin E."/>
            <person name="Saunders E."/>
            <person name="Tapia R."/>
            <person name="Tesmer J.G."/>
            <person name="Thayer N."/>
            <person name="Thompson L.S."/>
            <person name="Tice H."/>
            <person name="Ticknor L.O."/>
            <person name="Wills P.L."/>
            <person name="Brettin T.S."/>
            <person name="Gilna P."/>
        </authorList>
    </citation>
    <scope>NUCLEOTIDE SEQUENCE [LARGE SCALE GENOMIC DNA]</scope>
    <source>
        <strain>97-27</strain>
    </source>
</reference>
<protein>
    <recommendedName>
        <fullName>Dihydroorotate dehydrogenase B (NAD(+)), catalytic subunit</fullName>
        <shortName>DHOD B</shortName>
        <shortName>DHODase B</shortName>
        <shortName>DHOdehase B</shortName>
        <ecNumber>1.3.1.14</ecNumber>
    </recommendedName>
    <alternativeName>
        <fullName>Dihydroorotate oxidase B</fullName>
    </alternativeName>
    <alternativeName>
        <fullName>Orotate reductase (NADH)</fullName>
    </alternativeName>
</protein>
<gene>
    <name type="primary">pyrD</name>
    <name type="ordered locus">BT9727_3626</name>
</gene>
<organism>
    <name type="scientific">Bacillus thuringiensis subsp. konkukian (strain 97-27)</name>
    <dbReference type="NCBI Taxonomy" id="281309"/>
    <lineage>
        <taxon>Bacteria</taxon>
        <taxon>Bacillati</taxon>
        <taxon>Bacillota</taxon>
        <taxon>Bacilli</taxon>
        <taxon>Bacillales</taxon>
        <taxon>Bacillaceae</taxon>
        <taxon>Bacillus</taxon>
        <taxon>Bacillus cereus group</taxon>
    </lineage>
</organism>
<feature type="chain" id="PRO_1000024129" description="Dihydroorotate dehydrogenase B (NAD(+)), catalytic subunit">
    <location>
        <begin position="1"/>
        <end position="309"/>
    </location>
</feature>
<feature type="active site" description="Nucleophile">
    <location>
        <position position="130"/>
    </location>
</feature>
<feature type="binding site" evidence="1">
    <location>
        <position position="21"/>
    </location>
    <ligand>
        <name>FMN</name>
        <dbReference type="ChEBI" id="CHEBI:58210"/>
    </ligand>
</feature>
<feature type="binding site" evidence="1">
    <location>
        <begin position="45"/>
        <end position="46"/>
    </location>
    <ligand>
        <name>FMN</name>
        <dbReference type="ChEBI" id="CHEBI:58210"/>
    </ligand>
</feature>
<feature type="binding site" evidence="1">
    <location>
        <position position="45"/>
    </location>
    <ligand>
        <name>substrate</name>
    </ligand>
</feature>
<feature type="binding site" evidence="1">
    <location>
        <begin position="69"/>
        <end position="73"/>
    </location>
    <ligand>
        <name>substrate</name>
    </ligand>
</feature>
<feature type="binding site" evidence="1">
    <location>
        <position position="99"/>
    </location>
    <ligand>
        <name>FMN</name>
        <dbReference type="ChEBI" id="CHEBI:58210"/>
    </ligand>
</feature>
<feature type="binding site" evidence="1">
    <location>
        <position position="127"/>
    </location>
    <ligand>
        <name>FMN</name>
        <dbReference type="ChEBI" id="CHEBI:58210"/>
    </ligand>
</feature>
<feature type="binding site" evidence="1">
    <location>
        <position position="127"/>
    </location>
    <ligand>
        <name>substrate</name>
    </ligand>
</feature>
<feature type="binding site" evidence="1">
    <location>
        <position position="165"/>
    </location>
    <ligand>
        <name>FMN</name>
        <dbReference type="ChEBI" id="CHEBI:58210"/>
    </ligand>
</feature>
<feature type="binding site" evidence="1">
    <location>
        <position position="191"/>
    </location>
    <ligand>
        <name>FMN</name>
        <dbReference type="ChEBI" id="CHEBI:58210"/>
    </ligand>
</feature>
<feature type="binding site" evidence="1">
    <location>
        <begin position="192"/>
        <end position="193"/>
    </location>
    <ligand>
        <name>substrate</name>
    </ligand>
</feature>
<feature type="binding site" evidence="1">
    <location>
        <position position="217"/>
    </location>
    <ligand>
        <name>FMN</name>
        <dbReference type="ChEBI" id="CHEBI:58210"/>
    </ligand>
</feature>
<feature type="binding site" evidence="1">
    <location>
        <begin position="243"/>
        <end position="244"/>
    </location>
    <ligand>
        <name>FMN</name>
        <dbReference type="ChEBI" id="CHEBI:58210"/>
    </ligand>
</feature>
<feature type="binding site" evidence="1">
    <location>
        <begin position="265"/>
        <end position="266"/>
    </location>
    <ligand>
        <name>FMN</name>
        <dbReference type="ChEBI" id="CHEBI:58210"/>
    </ligand>
</feature>
<dbReference type="EC" id="1.3.1.14"/>
<dbReference type="EMBL" id="AE017355">
    <property type="protein sequence ID" value="AAT60633.1"/>
    <property type="molecule type" value="Genomic_DNA"/>
</dbReference>
<dbReference type="RefSeq" id="WP_001081057.1">
    <property type="nucleotide sequence ID" value="NC_005957.1"/>
</dbReference>
<dbReference type="RefSeq" id="YP_037946.1">
    <property type="nucleotide sequence ID" value="NC_005957.1"/>
</dbReference>
<dbReference type="SMR" id="Q6HET0"/>
<dbReference type="GeneID" id="83637592"/>
<dbReference type="KEGG" id="btk:BT9727_3626"/>
<dbReference type="PATRIC" id="fig|281309.8.peg.3864"/>
<dbReference type="HOGENOM" id="CLU_042042_0_0_9"/>
<dbReference type="UniPathway" id="UPA00070">
    <property type="reaction ID" value="UER00945"/>
</dbReference>
<dbReference type="Proteomes" id="UP000001301">
    <property type="component" value="Chromosome"/>
</dbReference>
<dbReference type="GO" id="GO:0005737">
    <property type="term" value="C:cytoplasm"/>
    <property type="evidence" value="ECO:0007669"/>
    <property type="project" value="UniProtKB-SubCell"/>
</dbReference>
<dbReference type="GO" id="GO:0004589">
    <property type="term" value="F:dihydroorotate dehydrogenase (NAD+) activity"/>
    <property type="evidence" value="ECO:0007669"/>
    <property type="project" value="UniProtKB-EC"/>
</dbReference>
<dbReference type="GO" id="GO:0006207">
    <property type="term" value="P:'de novo' pyrimidine nucleobase biosynthetic process"/>
    <property type="evidence" value="ECO:0007669"/>
    <property type="project" value="InterPro"/>
</dbReference>
<dbReference type="GO" id="GO:0044205">
    <property type="term" value="P:'de novo' UMP biosynthetic process"/>
    <property type="evidence" value="ECO:0007669"/>
    <property type="project" value="UniProtKB-UniRule"/>
</dbReference>
<dbReference type="CDD" id="cd04740">
    <property type="entry name" value="DHOD_1B_like"/>
    <property type="match status" value="1"/>
</dbReference>
<dbReference type="FunFam" id="3.20.20.70:FF:000069">
    <property type="entry name" value="Dihydroorotate dehydrogenase"/>
    <property type="match status" value="1"/>
</dbReference>
<dbReference type="Gene3D" id="3.20.20.70">
    <property type="entry name" value="Aldolase class I"/>
    <property type="match status" value="1"/>
</dbReference>
<dbReference type="HAMAP" id="MF_00224">
    <property type="entry name" value="DHO_dh_type1"/>
    <property type="match status" value="1"/>
</dbReference>
<dbReference type="InterPro" id="IPR013785">
    <property type="entry name" value="Aldolase_TIM"/>
</dbReference>
<dbReference type="InterPro" id="IPR050074">
    <property type="entry name" value="DHO_dehydrogenase"/>
</dbReference>
<dbReference type="InterPro" id="IPR033888">
    <property type="entry name" value="DHOD_1B"/>
</dbReference>
<dbReference type="InterPro" id="IPR024920">
    <property type="entry name" value="Dihydroorotate_DH_1"/>
</dbReference>
<dbReference type="InterPro" id="IPR012135">
    <property type="entry name" value="Dihydroorotate_DH_1_2"/>
</dbReference>
<dbReference type="InterPro" id="IPR005720">
    <property type="entry name" value="Dihydroorotate_DH_cat"/>
</dbReference>
<dbReference type="InterPro" id="IPR001295">
    <property type="entry name" value="Dihydroorotate_DH_CS"/>
</dbReference>
<dbReference type="InterPro" id="IPR049622">
    <property type="entry name" value="Dihydroorotate_DH_I"/>
</dbReference>
<dbReference type="NCBIfam" id="NF005574">
    <property type="entry name" value="PRK07259.1"/>
    <property type="match status" value="1"/>
</dbReference>
<dbReference type="NCBIfam" id="TIGR01037">
    <property type="entry name" value="pyrD_sub1_fam"/>
    <property type="match status" value="1"/>
</dbReference>
<dbReference type="PANTHER" id="PTHR48109:SF1">
    <property type="entry name" value="DIHYDROOROTATE DEHYDROGENASE (FUMARATE)"/>
    <property type="match status" value="1"/>
</dbReference>
<dbReference type="PANTHER" id="PTHR48109">
    <property type="entry name" value="DIHYDROOROTATE DEHYDROGENASE (QUINONE), MITOCHONDRIAL-RELATED"/>
    <property type="match status" value="1"/>
</dbReference>
<dbReference type="Pfam" id="PF01180">
    <property type="entry name" value="DHO_dh"/>
    <property type="match status" value="1"/>
</dbReference>
<dbReference type="PIRSF" id="PIRSF000164">
    <property type="entry name" value="DHO_oxidase"/>
    <property type="match status" value="1"/>
</dbReference>
<dbReference type="SUPFAM" id="SSF51395">
    <property type="entry name" value="FMN-linked oxidoreductases"/>
    <property type="match status" value="1"/>
</dbReference>
<dbReference type="PROSITE" id="PS00911">
    <property type="entry name" value="DHODEHASE_1"/>
    <property type="match status" value="1"/>
</dbReference>
<dbReference type="PROSITE" id="PS00912">
    <property type="entry name" value="DHODEHASE_2"/>
    <property type="match status" value="1"/>
</dbReference>
<sequence>MNRLQVELPGLSLKNPIIPASGCFGFGREYAQFYDLSVLGSIMIKATTEQPRYGNPTPRVAETPGGMLNAIGLQNPGLEKVMNSELPWLEQFDLPIIANVAGSQAEDYVAVAKEISKAPNVHALELNISCPNVKTGGIAFGTNPEIAADLTKRVKEVSEVPVYVKLSPNVANIVEIAKAIENAGADGLTMINTLLGMRLDLKTAKPILANRTGGLSGPAIKPVAIRMVHEVSQAVNIPIIGMGGIETAEDVIEFFYAGASAVAVGTANFIDPFVCPTIIEELPALLDELGFDHISECQGRSWKQTCHSR</sequence>
<proteinExistence type="inferred from homology"/>
<evidence type="ECO:0000250" key="1"/>
<evidence type="ECO:0000305" key="2"/>
<keyword id="KW-0963">Cytoplasm</keyword>
<keyword id="KW-0285">Flavoprotein</keyword>
<keyword id="KW-0288">FMN</keyword>
<keyword id="KW-0520">NAD</keyword>
<keyword id="KW-0560">Oxidoreductase</keyword>
<keyword id="KW-0665">Pyrimidine biosynthesis</keyword>